<accession>A3N398</accession>
<name>SYGA_ACTP2</name>
<evidence type="ECO:0000255" key="1">
    <source>
        <dbReference type="HAMAP-Rule" id="MF_00254"/>
    </source>
</evidence>
<dbReference type="EC" id="6.1.1.14" evidence="1"/>
<dbReference type="EMBL" id="CP000569">
    <property type="protein sequence ID" value="ABN74884.1"/>
    <property type="molecule type" value="Genomic_DNA"/>
</dbReference>
<dbReference type="RefSeq" id="WP_005616172.1">
    <property type="nucleotide sequence ID" value="NC_009053.1"/>
</dbReference>
<dbReference type="SMR" id="A3N398"/>
<dbReference type="STRING" id="416269.APL_1800"/>
<dbReference type="EnsemblBacteria" id="ABN74884">
    <property type="protein sequence ID" value="ABN74884"/>
    <property type="gene ID" value="APL_1800"/>
</dbReference>
<dbReference type="KEGG" id="apl:APL_1800"/>
<dbReference type="eggNOG" id="COG0752">
    <property type="taxonomic scope" value="Bacteria"/>
</dbReference>
<dbReference type="HOGENOM" id="CLU_057066_1_0_6"/>
<dbReference type="Proteomes" id="UP000001432">
    <property type="component" value="Chromosome"/>
</dbReference>
<dbReference type="GO" id="GO:0005829">
    <property type="term" value="C:cytosol"/>
    <property type="evidence" value="ECO:0007669"/>
    <property type="project" value="TreeGrafter"/>
</dbReference>
<dbReference type="GO" id="GO:0005524">
    <property type="term" value="F:ATP binding"/>
    <property type="evidence" value="ECO:0007669"/>
    <property type="project" value="UniProtKB-UniRule"/>
</dbReference>
<dbReference type="GO" id="GO:0004820">
    <property type="term" value="F:glycine-tRNA ligase activity"/>
    <property type="evidence" value="ECO:0007669"/>
    <property type="project" value="UniProtKB-UniRule"/>
</dbReference>
<dbReference type="GO" id="GO:0006426">
    <property type="term" value="P:glycyl-tRNA aminoacylation"/>
    <property type="evidence" value="ECO:0007669"/>
    <property type="project" value="UniProtKB-UniRule"/>
</dbReference>
<dbReference type="CDD" id="cd00733">
    <property type="entry name" value="GlyRS_alpha_core"/>
    <property type="match status" value="1"/>
</dbReference>
<dbReference type="FunFam" id="3.30.930.10:FF:000006">
    <property type="entry name" value="Glycine--tRNA ligase alpha subunit"/>
    <property type="match status" value="1"/>
</dbReference>
<dbReference type="Gene3D" id="3.30.930.10">
    <property type="entry name" value="Bira Bifunctional Protein, Domain 2"/>
    <property type="match status" value="1"/>
</dbReference>
<dbReference type="Gene3D" id="1.20.58.180">
    <property type="entry name" value="Class II aaRS and biotin synthetases, domain 2"/>
    <property type="match status" value="1"/>
</dbReference>
<dbReference type="HAMAP" id="MF_00254">
    <property type="entry name" value="Gly_tRNA_synth_alpha"/>
    <property type="match status" value="1"/>
</dbReference>
<dbReference type="InterPro" id="IPR045864">
    <property type="entry name" value="aa-tRNA-synth_II/BPL/LPL"/>
</dbReference>
<dbReference type="InterPro" id="IPR006194">
    <property type="entry name" value="Gly-tRNA-synth_heterodimer"/>
</dbReference>
<dbReference type="InterPro" id="IPR002310">
    <property type="entry name" value="Gly-tRNA_ligase_asu"/>
</dbReference>
<dbReference type="NCBIfam" id="TIGR00388">
    <property type="entry name" value="glyQ"/>
    <property type="match status" value="1"/>
</dbReference>
<dbReference type="NCBIfam" id="NF006827">
    <property type="entry name" value="PRK09348.1"/>
    <property type="match status" value="1"/>
</dbReference>
<dbReference type="PANTHER" id="PTHR30075:SF2">
    <property type="entry name" value="GLYCINE--TRNA LIGASE, CHLOROPLASTIC_MITOCHONDRIAL 2"/>
    <property type="match status" value="1"/>
</dbReference>
<dbReference type="PANTHER" id="PTHR30075">
    <property type="entry name" value="GLYCYL-TRNA SYNTHETASE"/>
    <property type="match status" value="1"/>
</dbReference>
<dbReference type="Pfam" id="PF02091">
    <property type="entry name" value="tRNA-synt_2e"/>
    <property type="match status" value="1"/>
</dbReference>
<dbReference type="PRINTS" id="PR01044">
    <property type="entry name" value="TRNASYNTHGA"/>
</dbReference>
<dbReference type="SUPFAM" id="SSF55681">
    <property type="entry name" value="Class II aaRS and biotin synthetases"/>
    <property type="match status" value="1"/>
</dbReference>
<dbReference type="PROSITE" id="PS50861">
    <property type="entry name" value="AA_TRNA_LIGASE_II_GLYAB"/>
    <property type="match status" value="1"/>
</dbReference>
<sequence>MTTKFNVKTFQGMILALQDYWANVGCTIVQPFDMEVGAGTSHPMTALRALGPEPMAFAYVQPSRRPTDGRYGENPNRLQHYYQFQVVIKPSPDNIQELYLGSLKMLGFDPTQHDIRFVEDNWENPTLGAWGLGWEVWLNGMEVTQFTYFQQVGGLECKPVTGEVTYGLERLAMYIQGVDSVYDLVWSDGPLGKTTYGDVFHQNEVEQSTYNFEYADVDFLFKAFEQYEKEATELLALEKPLPLPAYERILKAAHSFNMLDARKAISVTERQRYILRIRTLTKGVAEAYYVSREALGFPGCK</sequence>
<comment type="catalytic activity">
    <reaction evidence="1">
        <text>tRNA(Gly) + glycine + ATP = glycyl-tRNA(Gly) + AMP + diphosphate</text>
        <dbReference type="Rhea" id="RHEA:16013"/>
        <dbReference type="Rhea" id="RHEA-COMP:9664"/>
        <dbReference type="Rhea" id="RHEA-COMP:9683"/>
        <dbReference type="ChEBI" id="CHEBI:30616"/>
        <dbReference type="ChEBI" id="CHEBI:33019"/>
        <dbReference type="ChEBI" id="CHEBI:57305"/>
        <dbReference type="ChEBI" id="CHEBI:78442"/>
        <dbReference type="ChEBI" id="CHEBI:78522"/>
        <dbReference type="ChEBI" id="CHEBI:456215"/>
        <dbReference type="EC" id="6.1.1.14"/>
    </reaction>
</comment>
<comment type="subunit">
    <text evidence="1">Tetramer of two alpha and two beta subunits.</text>
</comment>
<comment type="subcellular location">
    <subcellularLocation>
        <location evidence="1">Cytoplasm</location>
    </subcellularLocation>
</comment>
<comment type="similarity">
    <text evidence="1">Belongs to the class-II aminoacyl-tRNA synthetase family.</text>
</comment>
<organism>
    <name type="scientific">Actinobacillus pleuropneumoniae serotype 5b (strain L20)</name>
    <dbReference type="NCBI Taxonomy" id="416269"/>
    <lineage>
        <taxon>Bacteria</taxon>
        <taxon>Pseudomonadati</taxon>
        <taxon>Pseudomonadota</taxon>
        <taxon>Gammaproteobacteria</taxon>
        <taxon>Pasteurellales</taxon>
        <taxon>Pasteurellaceae</taxon>
        <taxon>Actinobacillus</taxon>
    </lineage>
</organism>
<protein>
    <recommendedName>
        <fullName evidence="1">Glycine--tRNA ligase alpha subunit</fullName>
        <ecNumber evidence="1">6.1.1.14</ecNumber>
    </recommendedName>
    <alternativeName>
        <fullName evidence="1">Glycyl-tRNA synthetase alpha subunit</fullName>
        <shortName evidence="1">GlyRS</shortName>
    </alternativeName>
</protein>
<keyword id="KW-0030">Aminoacyl-tRNA synthetase</keyword>
<keyword id="KW-0067">ATP-binding</keyword>
<keyword id="KW-0963">Cytoplasm</keyword>
<keyword id="KW-0436">Ligase</keyword>
<keyword id="KW-0547">Nucleotide-binding</keyword>
<keyword id="KW-0648">Protein biosynthesis</keyword>
<keyword id="KW-1185">Reference proteome</keyword>
<proteinExistence type="inferred from homology"/>
<gene>
    <name evidence="1" type="primary">glyQ</name>
    <name type="ordered locus">APL_1800</name>
</gene>
<feature type="chain" id="PRO_1000047392" description="Glycine--tRNA ligase alpha subunit">
    <location>
        <begin position="1"/>
        <end position="301"/>
    </location>
</feature>
<reference key="1">
    <citation type="journal article" date="2008" name="J. Bacteriol.">
        <title>The complete genome sequence of Actinobacillus pleuropneumoniae L20 (serotype 5b).</title>
        <authorList>
            <person name="Foote S.J."/>
            <person name="Bosse J.T."/>
            <person name="Bouevitch A.B."/>
            <person name="Langford P.R."/>
            <person name="Young N.M."/>
            <person name="Nash J.H.E."/>
        </authorList>
    </citation>
    <scope>NUCLEOTIDE SEQUENCE [LARGE SCALE GENOMIC DNA]</scope>
    <source>
        <strain>L20</strain>
    </source>
</reference>